<evidence type="ECO:0000255" key="1">
    <source>
        <dbReference type="HAMAP-Rule" id="MF_02014"/>
    </source>
</evidence>
<evidence type="ECO:0000255" key="2">
    <source>
        <dbReference type="PROSITE-ProRule" id="PRU01118"/>
    </source>
</evidence>
<comment type="function">
    <text evidence="1">Inhibits cell division during the SOS response. Affects a later stage of the cell division protein assembly, after the assembly of the Z ring, by probably suppressing recruitment of FtsL and/or DivIC to the division machinery.</text>
</comment>
<comment type="subcellular location">
    <subcellularLocation>
        <location evidence="1">Cytoplasm</location>
    </subcellularLocation>
</comment>
<comment type="similarity">
    <text evidence="1">Belongs to the YneA family.</text>
</comment>
<keyword id="KW-0131">Cell cycle</keyword>
<keyword id="KW-0132">Cell division</keyword>
<keyword id="KW-0963">Cytoplasm</keyword>
<keyword id="KW-0227">DNA damage</keyword>
<keyword id="KW-0234">DNA repair</keyword>
<keyword id="KW-0717">Septation</keyword>
<keyword id="KW-0742">SOS response</keyword>
<feature type="chain" id="PRO_0000346646" description="Cell division suppressor protein YneA">
    <location>
        <begin position="1"/>
        <end position="109"/>
    </location>
</feature>
<feature type="domain" description="LysM" evidence="2">
    <location>
        <begin position="39"/>
        <end position="90"/>
    </location>
</feature>
<gene>
    <name evidence="1" type="primary">yneA</name>
    <name type="ordered locus">LMOf2365_1321</name>
</gene>
<proteinExistence type="inferred from homology"/>
<name>YNEA_LISMF</name>
<dbReference type="EMBL" id="AE017262">
    <property type="protein sequence ID" value="AAT04096.1"/>
    <property type="molecule type" value="Genomic_DNA"/>
</dbReference>
<dbReference type="RefSeq" id="WP_003734518.1">
    <property type="nucleotide sequence ID" value="NC_002973.6"/>
</dbReference>
<dbReference type="SMR" id="Q720B8"/>
<dbReference type="KEGG" id="lmf:LMOf2365_1321"/>
<dbReference type="HOGENOM" id="CLU_136034_4_0_9"/>
<dbReference type="GO" id="GO:0005737">
    <property type="term" value="C:cytoplasm"/>
    <property type="evidence" value="ECO:0007669"/>
    <property type="project" value="UniProtKB-SubCell"/>
</dbReference>
<dbReference type="GO" id="GO:0000917">
    <property type="term" value="P:division septum assembly"/>
    <property type="evidence" value="ECO:0007669"/>
    <property type="project" value="UniProtKB-KW"/>
</dbReference>
<dbReference type="GO" id="GO:0006281">
    <property type="term" value="P:DNA repair"/>
    <property type="evidence" value="ECO:0007669"/>
    <property type="project" value="UniProtKB-KW"/>
</dbReference>
<dbReference type="GO" id="GO:0051782">
    <property type="term" value="P:negative regulation of cell division"/>
    <property type="evidence" value="ECO:0007669"/>
    <property type="project" value="UniProtKB-UniRule"/>
</dbReference>
<dbReference type="GO" id="GO:0009432">
    <property type="term" value="P:SOS response"/>
    <property type="evidence" value="ECO:0007669"/>
    <property type="project" value="UniProtKB-UniRule"/>
</dbReference>
<dbReference type="Gene3D" id="3.10.350.10">
    <property type="entry name" value="LysM domain"/>
    <property type="match status" value="1"/>
</dbReference>
<dbReference type="HAMAP" id="MF_02014">
    <property type="entry name" value="YneA"/>
    <property type="match status" value="1"/>
</dbReference>
<dbReference type="InterPro" id="IPR022887">
    <property type="entry name" value="Cell_div_suppressor_YneA"/>
</dbReference>
<dbReference type="InterPro" id="IPR018392">
    <property type="entry name" value="LysM_dom"/>
</dbReference>
<dbReference type="InterPro" id="IPR036779">
    <property type="entry name" value="LysM_dom_sf"/>
</dbReference>
<dbReference type="NCBIfam" id="NF010723">
    <property type="entry name" value="PRK14125.1"/>
    <property type="match status" value="1"/>
</dbReference>
<dbReference type="PROSITE" id="PS51782">
    <property type="entry name" value="LYSM"/>
    <property type="match status" value="1"/>
</dbReference>
<organism>
    <name type="scientific">Listeria monocytogenes serotype 4b (strain F2365)</name>
    <dbReference type="NCBI Taxonomy" id="265669"/>
    <lineage>
        <taxon>Bacteria</taxon>
        <taxon>Bacillati</taxon>
        <taxon>Bacillota</taxon>
        <taxon>Bacilli</taxon>
        <taxon>Bacillales</taxon>
        <taxon>Listeriaceae</taxon>
        <taxon>Listeria</taxon>
    </lineage>
</organism>
<sequence>MTMKLIWDKFYVSIIFVLTCIVLGIILMCTVVGGGNDYSEVNVSEGDSLWALADQYAGKSDMAKADFVSWVEKENNLADGHVEAGESVVIPVHKTKLIKSDSTIQLANQ</sequence>
<accession>Q720B8</accession>
<protein>
    <recommendedName>
        <fullName evidence="1">Cell division suppressor protein YneA</fullName>
    </recommendedName>
</protein>
<reference key="1">
    <citation type="journal article" date="2004" name="Nucleic Acids Res.">
        <title>Whole genome comparisons of serotype 4b and 1/2a strains of the food-borne pathogen Listeria monocytogenes reveal new insights into the core genome components of this species.</title>
        <authorList>
            <person name="Nelson K.E."/>
            <person name="Fouts D.E."/>
            <person name="Mongodin E.F."/>
            <person name="Ravel J."/>
            <person name="DeBoy R.T."/>
            <person name="Kolonay J.F."/>
            <person name="Rasko D.A."/>
            <person name="Angiuoli S.V."/>
            <person name="Gill S.R."/>
            <person name="Paulsen I.T."/>
            <person name="Peterson J.D."/>
            <person name="White O."/>
            <person name="Nelson W.C."/>
            <person name="Nierman W.C."/>
            <person name="Beanan M.J."/>
            <person name="Brinkac L.M."/>
            <person name="Daugherty S.C."/>
            <person name="Dodson R.J."/>
            <person name="Durkin A.S."/>
            <person name="Madupu R."/>
            <person name="Haft D.H."/>
            <person name="Selengut J."/>
            <person name="Van Aken S.E."/>
            <person name="Khouri H.M."/>
            <person name="Fedorova N."/>
            <person name="Forberger H.A."/>
            <person name="Tran B."/>
            <person name="Kathariou S."/>
            <person name="Wonderling L.D."/>
            <person name="Uhlich G.A."/>
            <person name="Bayles D.O."/>
            <person name="Luchansky J.B."/>
            <person name="Fraser C.M."/>
        </authorList>
    </citation>
    <scope>NUCLEOTIDE SEQUENCE [LARGE SCALE GENOMIC DNA]</scope>
    <source>
        <strain>F2365</strain>
    </source>
</reference>